<accession>Q4JV51</accession>
<name>IF2_CORJK</name>
<comment type="function">
    <text evidence="2">One of the essential components for the initiation of protein synthesis. Protects formylmethionyl-tRNA from spontaneous hydrolysis and promotes its binding to the 30S ribosomal subunits. Also involved in the hydrolysis of GTP during the formation of the 70S ribosomal complex.</text>
</comment>
<comment type="subcellular location">
    <subcellularLocation>
        <location evidence="2">Cytoplasm</location>
    </subcellularLocation>
</comment>
<comment type="similarity">
    <text evidence="2">Belongs to the TRAFAC class translation factor GTPase superfamily. Classic translation factor GTPase family. IF-2 subfamily.</text>
</comment>
<keyword id="KW-0963">Cytoplasm</keyword>
<keyword id="KW-0342">GTP-binding</keyword>
<keyword id="KW-0396">Initiation factor</keyword>
<keyword id="KW-0547">Nucleotide-binding</keyword>
<keyword id="KW-0648">Protein biosynthesis</keyword>
<keyword id="KW-1185">Reference proteome</keyword>
<sequence length="922" mass="96528">MAGKLRVHELAKELGVTSKELLATLKEQGEFVKTASSTVQPPVVKKMKKHYGVGEESAKESATTPSPAAKPGPKPAAKAAPKAAAKPGPKPGPKPGPQPVKNTNPVAGAGTRPTSTVKPGEKPAPKPGAKPAPKTAAKPTPKPGAKPGPKPGGAKPGAKPGPKPGGRAPRVANNPFSSGAPAERPAPRPRGGQAGPGDMPRPGSRPGGAKKAGPKPGGAKQGGGRRPSPAMMPSHPNPAQMPSKSDNFGGGRGRGGRHGGPGGPGGPGGPGGPRGGRGGRRGGTAGAFGRPGGAPRKGRKSKRQKRNEYEAMQAPSVVGGVKLPNGKGAKIRLARGASLMDFAEKIKADAAALVQALFNLGEMVTATQSVSDETLMLLGEEMDYKVEVVSPEDEDRELLESFDLQFGEDEGEDEDLAQRPPVVTVMGHVDHGKTRLLDTIRKANVGSGEAGGITQHIGAYQVSVSMEGEDRLVTFLDTPGHEAFTAMRARGAKSTDIAILVVAADDGVMPQTVEAINHAKAADIPVVVAVNKIDKEGAQPDKIRGQLTEYGLIPEEYGGETMFVDISAKQGTNIDQLLESVLLTADASLDLRANPDMDAQGVAIEAHLDRGRGPVATIIVQRGTLRVGDSIVVGDAYGRVRRMIDEHGNDVQEAGPSRPVQVLGLTSVSGAGDNLLVVDEDRTARQIADRRDARRRNALAARSRKRVSLEDLDSVLKETNTLNLILKGDNAGTVEALEDALLKIEVDDEVDLNIIDRGVGAVTETNVNLAAASDAVIIGFNVRAEGKATEVANAEGVDIRYYSIIYKAIEEVEAALKGMLKPIYEEKQIGTAEIRQIFKASSVGLIAGCMVETGKVRRNAQARLVRDGNVVAEKTTIESLRREKDDVTEVSAGYECGMVLSYPDIQVDDIIEVFELVEVPRT</sequence>
<protein>
    <recommendedName>
        <fullName evidence="2">Translation initiation factor IF-2</fullName>
    </recommendedName>
</protein>
<proteinExistence type="inferred from homology"/>
<reference key="1">
    <citation type="journal article" date="2005" name="J. Bacteriol.">
        <title>Complete genome sequence and analysis of the multiresistant nosocomial pathogen Corynebacterium jeikeium K411, a lipid-requiring bacterium of the human skin flora.</title>
        <authorList>
            <person name="Tauch A."/>
            <person name="Kaiser O."/>
            <person name="Hain T."/>
            <person name="Goesmann A."/>
            <person name="Weisshaar B."/>
            <person name="Albersmeier A."/>
            <person name="Bekel T."/>
            <person name="Bischoff N."/>
            <person name="Brune I."/>
            <person name="Chakraborty T."/>
            <person name="Kalinowski J."/>
            <person name="Meyer F."/>
            <person name="Rupp O."/>
            <person name="Schneiker S."/>
            <person name="Viehoever P."/>
            <person name="Puehler A."/>
        </authorList>
    </citation>
    <scope>NUCLEOTIDE SEQUENCE [LARGE SCALE GENOMIC DNA]</scope>
    <source>
        <strain>K411</strain>
    </source>
</reference>
<gene>
    <name evidence="2" type="primary">infB</name>
    <name type="ordered locus">jk1142</name>
</gene>
<dbReference type="EMBL" id="CR931997">
    <property type="protein sequence ID" value="CAI37306.1"/>
    <property type="molecule type" value="Genomic_DNA"/>
</dbReference>
<dbReference type="RefSeq" id="WP_011273680.1">
    <property type="nucleotide sequence ID" value="NC_007164.1"/>
</dbReference>
<dbReference type="SMR" id="Q4JV51"/>
<dbReference type="STRING" id="306537.jk1142"/>
<dbReference type="KEGG" id="cjk:jk1142"/>
<dbReference type="PATRIC" id="fig|306537.10.peg.1155"/>
<dbReference type="eggNOG" id="COG0532">
    <property type="taxonomic scope" value="Bacteria"/>
</dbReference>
<dbReference type="HOGENOM" id="CLU_006301_9_0_11"/>
<dbReference type="OrthoDB" id="9811804at2"/>
<dbReference type="Proteomes" id="UP000000545">
    <property type="component" value="Chromosome"/>
</dbReference>
<dbReference type="GO" id="GO:0005829">
    <property type="term" value="C:cytosol"/>
    <property type="evidence" value="ECO:0007669"/>
    <property type="project" value="TreeGrafter"/>
</dbReference>
<dbReference type="GO" id="GO:0005525">
    <property type="term" value="F:GTP binding"/>
    <property type="evidence" value="ECO:0007669"/>
    <property type="project" value="UniProtKB-KW"/>
</dbReference>
<dbReference type="GO" id="GO:0003924">
    <property type="term" value="F:GTPase activity"/>
    <property type="evidence" value="ECO:0007669"/>
    <property type="project" value="UniProtKB-UniRule"/>
</dbReference>
<dbReference type="GO" id="GO:0003743">
    <property type="term" value="F:translation initiation factor activity"/>
    <property type="evidence" value="ECO:0007669"/>
    <property type="project" value="UniProtKB-UniRule"/>
</dbReference>
<dbReference type="CDD" id="cd01887">
    <property type="entry name" value="IF2_eIF5B"/>
    <property type="match status" value="1"/>
</dbReference>
<dbReference type="CDD" id="cd03702">
    <property type="entry name" value="IF2_mtIF2_II"/>
    <property type="match status" value="1"/>
</dbReference>
<dbReference type="CDD" id="cd03692">
    <property type="entry name" value="mtIF2_IVc"/>
    <property type="match status" value="1"/>
</dbReference>
<dbReference type="FunFam" id="2.40.30.10:FF:000007">
    <property type="entry name" value="Translation initiation factor IF-2"/>
    <property type="match status" value="1"/>
</dbReference>
<dbReference type="FunFam" id="2.40.30.10:FF:000008">
    <property type="entry name" value="Translation initiation factor IF-2"/>
    <property type="match status" value="1"/>
</dbReference>
<dbReference type="FunFam" id="3.40.50.10050:FF:000001">
    <property type="entry name" value="Translation initiation factor IF-2"/>
    <property type="match status" value="1"/>
</dbReference>
<dbReference type="FunFam" id="3.40.50.300:FF:000019">
    <property type="entry name" value="Translation initiation factor IF-2"/>
    <property type="match status" value="1"/>
</dbReference>
<dbReference type="Gene3D" id="1.10.10.2480">
    <property type="match status" value="1"/>
</dbReference>
<dbReference type="Gene3D" id="3.40.50.300">
    <property type="entry name" value="P-loop containing nucleotide triphosphate hydrolases"/>
    <property type="match status" value="1"/>
</dbReference>
<dbReference type="Gene3D" id="2.40.30.10">
    <property type="entry name" value="Translation factors"/>
    <property type="match status" value="2"/>
</dbReference>
<dbReference type="Gene3D" id="3.40.50.10050">
    <property type="entry name" value="Translation initiation factor IF- 2, domain 3"/>
    <property type="match status" value="1"/>
</dbReference>
<dbReference type="HAMAP" id="MF_00100_B">
    <property type="entry name" value="IF_2_B"/>
    <property type="match status" value="1"/>
</dbReference>
<dbReference type="InterPro" id="IPR053905">
    <property type="entry name" value="EF-G-like_DII"/>
</dbReference>
<dbReference type="InterPro" id="IPR044145">
    <property type="entry name" value="IF2_II"/>
</dbReference>
<dbReference type="InterPro" id="IPR006847">
    <property type="entry name" value="IF2_N"/>
</dbReference>
<dbReference type="InterPro" id="IPR027417">
    <property type="entry name" value="P-loop_NTPase"/>
</dbReference>
<dbReference type="InterPro" id="IPR005225">
    <property type="entry name" value="Small_GTP-bd"/>
</dbReference>
<dbReference type="InterPro" id="IPR000795">
    <property type="entry name" value="T_Tr_GTP-bd_dom"/>
</dbReference>
<dbReference type="InterPro" id="IPR000178">
    <property type="entry name" value="TF_IF2_bacterial-like"/>
</dbReference>
<dbReference type="InterPro" id="IPR015760">
    <property type="entry name" value="TIF_IF2"/>
</dbReference>
<dbReference type="InterPro" id="IPR023115">
    <property type="entry name" value="TIF_IF2_dom3"/>
</dbReference>
<dbReference type="InterPro" id="IPR036925">
    <property type="entry name" value="TIF_IF2_dom3_sf"/>
</dbReference>
<dbReference type="InterPro" id="IPR009000">
    <property type="entry name" value="Transl_B-barrel_sf"/>
</dbReference>
<dbReference type="NCBIfam" id="TIGR00487">
    <property type="entry name" value="IF-2"/>
    <property type="match status" value="1"/>
</dbReference>
<dbReference type="NCBIfam" id="TIGR00231">
    <property type="entry name" value="small_GTP"/>
    <property type="match status" value="1"/>
</dbReference>
<dbReference type="PANTHER" id="PTHR43381:SF5">
    <property type="entry name" value="TR-TYPE G DOMAIN-CONTAINING PROTEIN"/>
    <property type="match status" value="1"/>
</dbReference>
<dbReference type="PANTHER" id="PTHR43381">
    <property type="entry name" value="TRANSLATION INITIATION FACTOR IF-2-RELATED"/>
    <property type="match status" value="1"/>
</dbReference>
<dbReference type="Pfam" id="PF22042">
    <property type="entry name" value="EF-G_D2"/>
    <property type="match status" value="1"/>
</dbReference>
<dbReference type="Pfam" id="PF00009">
    <property type="entry name" value="GTP_EFTU"/>
    <property type="match status" value="1"/>
</dbReference>
<dbReference type="Pfam" id="PF11987">
    <property type="entry name" value="IF-2"/>
    <property type="match status" value="1"/>
</dbReference>
<dbReference type="Pfam" id="PF04760">
    <property type="entry name" value="IF2_N"/>
    <property type="match status" value="2"/>
</dbReference>
<dbReference type="PRINTS" id="PR00315">
    <property type="entry name" value="ELONGATNFCT"/>
</dbReference>
<dbReference type="SUPFAM" id="SSF52156">
    <property type="entry name" value="Initiation factor IF2/eIF5b, domain 3"/>
    <property type="match status" value="1"/>
</dbReference>
<dbReference type="SUPFAM" id="SSF52540">
    <property type="entry name" value="P-loop containing nucleoside triphosphate hydrolases"/>
    <property type="match status" value="1"/>
</dbReference>
<dbReference type="SUPFAM" id="SSF50447">
    <property type="entry name" value="Translation proteins"/>
    <property type="match status" value="2"/>
</dbReference>
<dbReference type="PROSITE" id="PS51722">
    <property type="entry name" value="G_TR_2"/>
    <property type="match status" value="1"/>
</dbReference>
<evidence type="ECO:0000250" key="1"/>
<evidence type="ECO:0000255" key="2">
    <source>
        <dbReference type="HAMAP-Rule" id="MF_00100"/>
    </source>
</evidence>
<evidence type="ECO:0000256" key="3">
    <source>
        <dbReference type="SAM" id="MobiDB-lite"/>
    </source>
</evidence>
<organism>
    <name type="scientific">Corynebacterium jeikeium (strain K411)</name>
    <dbReference type="NCBI Taxonomy" id="306537"/>
    <lineage>
        <taxon>Bacteria</taxon>
        <taxon>Bacillati</taxon>
        <taxon>Actinomycetota</taxon>
        <taxon>Actinomycetes</taxon>
        <taxon>Mycobacteriales</taxon>
        <taxon>Corynebacteriaceae</taxon>
        <taxon>Corynebacterium</taxon>
    </lineage>
</organism>
<feature type="chain" id="PRO_0000228187" description="Translation initiation factor IF-2">
    <location>
        <begin position="1"/>
        <end position="922"/>
    </location>
</feature>
<feature type="domain" description="tr-type G">
    <location>
        <begin position="418"/>
        <end position="590"/>
    </location>
</feature>
<feature type="region of interest" description="Disordered" evidence="3">
    <location>
        <begin position="33"/>
        <end position="310"/>
    </location>
</feature>
<feature type="region of interest" description="G1" evidence="1">
    <location>
        <begin position="427"/>
        <end position="434"/>
    </location>
</feature>
<feature type="region of interest" description="G2" evidence="1">
    <location>
        <begin position="452"/>
        <end position="456"/>
    </location>
</feature>
<feature type="region of interest" description="G3" evidence="1">
    <location>
        <begin position="477"/>
        <end position="480"/>
    </location>
</feature>
<feature type="region of interest" description="G4" evidence="1">
    <location>
        <begin position="531"/>
        <end position="534"/>
    </location>
</feature>
<feature type="region of interest" description="G5" evidence="1">
    <location>
        <begin position="567"/>
        <end position="569"/>
    </location>
</feature>
<feature type="compositionally biased region" description="Low complexity" evidence="3">
    <location>
        <begin position="75"/>
        <end position="87"/>
    </location>
</feature>
<feature type="compositionally biased region" description="Pro residues" evidence="3">
    <location>
        <begin position="88"/>
        <end position="98"/>
    </location>
</feature>
<feature type="compositionally biased region" description="Pro residues" evidence="3">
    <location>
        <begin position="140"/>
        <end position="150"/>
    </location>
</feature>
<feature type="compositionally biased region" description="Low complexity" evidence="3">
    <location>
        <begin position="151"/>
        <end position="169"/>
    </location>
</feature>
<feature type="compositionally biased region" description="Low complexity" evidence="3">
    <location>
        <begin position="202"/>
        <end position="211"/>
    </location>
</feature>
<feature type="compositionally biased region" description="Gly residues" evidence="3">
    <location>
        <begin position="215"/>
        <end position="225"/>
    </location>
</feature>
<feature type="compositionally biased region" description="Gly residues" evidence="3">
    <location>
        <begin position="248"/>
        <end position="292"/>
    </location>
</feature>
<feature type="compositionally biased region" description="Basic residues" evidence="3">
    <location>
        <begin position="296"/>
        <end position="305"/>
    </location>
</feature>
<feature type="binding site" evidence="2">
    <location>
        <begin position="427"/>
        <end position="434"/>
    </location>
    <ligand>
        <name>GTP</name>
        <dbReference type="ChEBI" id="CHEBI:37565"/>
    </ligand>
</feature>
<feature type="binding site" evidence="2">
    <location>
        <begin position="477"/>
        <end position="481"/>
    </location>
    <ligand>
        <name>GTP</name>
        <dbReference type="ChEBI" id="CHEBI:37565"/>
    </ligand>
</feature>
<feature type="binding site" evidence="2">
    <location>
        <begin position="531"/>
        <end position="534"/>
    </location>
    <ligand>
        <name>GTP</name>
        <dbReference type="ChEBI" id="CHEBI:37565"/>
    </ligand>
</feature>